<evidence type="ECO:0000255" key="1">
    <source>
        <dbReference type="HAMAP-Rule" id="MF_00115"/>
    </source>
</evidence>
<evidence type="ECO:0000256" key="2">
    <source>
        <dbReference type="SAM" id="MobiDB-lite"/>
    </source>
</evidence>
<gene>
    <name evidence="1" type="primary">mscL</name>
    <name type="ordered locus">SG2250</name>
</gene>
<dbReference type="EMBL" id="AP008232">
    <property type="protein sequence ID" value="BAE75525.1"/>
    <property type="molecule type" value="Genomic_DNA"/>
</dbReference>
<dbReference type="SMR" id="Q2NQQ0"/>
<dbReference type="STRING" id="343509.SG2250"/>
<dbReference type="KEGG" id="sgl:SG2250"/>
<dbReference type="eggNOG" id="COG1970">
    <property type="taxonomic scope" value="Bacteria"/>
</dbReference>
<dbReference type="HOGENOM" id="CLU_095787_0_0_6"/>
<dbReference type="OrthoDB" id="9810350at2"/>
<dbReference type="Proteomes" id="UP000001932">
    <property type="component" value="Chromosome"/>
</dbReference>
<dbReference type="GO" id="GO:0005886">
    <property type="term" value="C:plasma membrane"/>
    <property type="evidence" value="ECO:0007669"/>
    <property type="project" value="UniProtKB-SubCell"/>
</dbReference>
<dbReference type="GO" id="GO:0008381">
    <property type="term" value="F:mechanosensitive monoatomic ion channel activity"/>
    <property type="evidence" value="ECO:0007669"/>
    <property type="project" value="UniProtKB-UniRule"/>
</dbReference>
<dbReference type="Gene3D" id="1.10.1200.120">
    <property type="entry name" value="Large-conductance mechanosensitive channel, MscL, domain 1"/>
    <property type="match status" value="1"/>
</dbReference>
<dbReference type="HAMAP" id="MF_00115">
    <property type="entry name" value="MscL"/>
    <property type="match status" value="1"/>
</dbReference>
<dbReference type="InterPro" id="IPR019823">
    <property type="entry name" value="Mechanosensitive_channel_CS"/>
</dbReference>
<dbReference type="InterPro" id="IPR001185">
    <property type="entry name" value="MS_channel"/>
</dbReference>
<dbReference type="InterPro" id="IPR037673">
    <property type="entry name" value="MSC/AndL"/>
</dbReference>
<dbReference type="InterPro" id="IPR036019">
    <property type="entry name" value="MscL_channel"/>
</dbReference>
<dbReference type="NCBIfam" id="TIGR00220">
    <property type="entry name" value="mscL"/>
    <property type="match status" value="1"/>
</dbReference>
<dbReference type="NCBIfam" id="NF001843">
    <property type="entry name" value="PRK00567.1-4"/>
    <property type="match status" value="1"/>
</dbReference>
<dbReference type="PANTHER" id="PTHR30266:SF2">
    <property type="entry name" value="LARGE-CONDUCTANCE MECHANOSENSITIVE CHANNEL"/>
    <property type="match status" value="1"/>
</dbReference>
<dbReference type="PANTHER" id="PTHR30266">
    <property type="entry name" value="MECHANOSENSITIVE CHANNEL MSCL"/>
    <property type="match status" value="1"/>
</dbReference>
<dbReference type="Pfam" id="PF01741">
    <property type="entry name" value="MscL"/>
    <property type="match status" value="1"/>
</dbReference>
<dbReference type="PRINTS" id="PR01264">
    <property type="entry name" value="MECHCHANNEL"/>
</dbReference>
<dbReference type="SUPFAM" id="SSF81330">
    <property type="entry name" value="Gated mechanosensitive channel"/>
    <property type="match status" value="1"/>
</dbReference>
<dbReference type="PROSITE" id="PS01327">
    <property type="entry name" value="MSCL"/>
    <property type="match status" value="1"/>
</dbReference>
<accession>Q2NQQ0</accession>
<reference key="1">
    <citation type="journal article" date="2006" name="Genome Res.">
        <title>Massive genome erosion and functional adaptations provide insights into the symbiotic lifestyle of Sodalis glossinidius in the tsetse host.</title>
        <authorList>
            <person name="Toh H."/>
            <person name="Weiss B.L."/>
            <person name="Perkin S.A.H."/>
            <person name="Yamashita A."/>
            <person name="Oshima K."/>
            <person name="Hattori M."/>
            <person name="Aksoy S."/>
        </authorList>
    </citation>
    <scope>NUCLEOTIDE SEQUENCE [LARGE SCALE GENOMIC DNA]</scope>
    <source>
        <strain>morsitans</strain>
    </source>
</reference>
<organism>
    <name type="scientific">Sodalis glossinidius (strain morsitans)</name>
    <dbReference type="NCBI Taxonomy" id="343509"/>
    <lineage>
        <taxon>Bacteria</taxon>
        <taxon>Pseudomonadati</taxon>
        <taxon>Pseudomonadota</taxon>
        <taxon>Gammaproteobacteria</taxon>
        <taxon>Enterobacterales</taxon>
        <taxon>Bruguierivoracaceae</taxon>
        <taxon>Sodalis</taxon>
    </lineage>
</organism>
<protein>
    <recommendedName>
        <fullName evidence="1">Large-conductance mechanosensitive channel</fullName>
    </recommendedName>
</protein>
<comment type="function">
    <text evidence="1">Channel that opens in response to stretch forces in the membrane lipid bilayer. May participate in the regulation of osmotic pressure changes within the cell.</text>
</comment>
<comment type="subunit">
    <text evidence="1">Homopentamer.</text>
</comment>
<comment type="subcellular location">
    <subcellularLocation>
        <location evidence="1">Cell inner membrane</location>
        <topology evidence="1">Multi-pass membrane protein</topology>
    </subcellularLocation>
</comment>
<comment type="similarity">
    <text evidence="1">Belongs to the MscL family.</text>
</comment>
<feature type="chain" id="PRO_0000238037" description="Large-conductance mechanosensitive channel">
    <location>
        <begin position="1"/>
        <end position="144"/>
    </location>
</feature>
<feature type="transmembrane region" description="Helical" evidence="1">
    <location>
        <begin position="21"/>
        <end position="41"/>
    </location>
</feature>
<feature type="transmembrane region" description="Helical" evidence="1">
    <location>
        <begin position="76"/>
        <end position="96"/>
    </location>
</feature>
<feature type="region of interest" description="Disordered" evidence="2">
    <location>
        <begin position="105"/>
        <end position="144"/>
    </location>
</feature>
<feature type="compositionally biased region" description="Basic and acidic residues" evidence="2">
    <location>
        <begin position="118"/>
        <end position="134"/>
    </location>
</feature>
<keyword id="KW-0997">Cell inner membrane</keyword>
<keyword id="KW-1003">Cell membrane</keyword>
<keyword id="KW-0407">Ion channel</keyword>
<keyword id="KW-0406">Ion transport</keyword>
<keyword id="KW-0472">Membrane</keyword>
<keyword id="KW-0812">Transmembrane</keyword>
<keyword id="KW-1133">Transmembrane helix</keyword>
<keyword id="KW-0813">Transport</keyword>
<name>MSCL_SODGM</name>
<proteinExistence type="inferred from homology"/>
<sequence length="144" mass="15901">MSFLQKFRKFAMRGNVVDLAVGIIIGAAFGKIVSSLVANVIMPQLGLLIGGIDFKQFSWVLKPAQGDTPAVVMKYGIFLQNIFDFIIVAFAVFCIIKLINRNASQRGGKTRRAVQTECGRDAAYRDPRSLETTKQRHGAGYNDD</sequence>